<accession>A1WTM6</accession>
<protein>
    <recommendedName>
        <fullName evidence="1">Probable alpha-L-glutamate ligase</fullName>
        <ecNumber evidence="1">6.3.2.-</ecNumber>
    </recommendedName>
</protein>
<gene>
    <name evidence="1" type="primary">rimK</name>
    <name type="ordered locus">Hhal_0244</name>
</gene>
<organism>
    <name type="scientific">Halorhodospira halophila (strain DSM 244 / SL1)</name>
    <name type="common">Ectothiorhodospira halophila (strain DSM 244 / SL1)</name>
    <dbReference type="NCBI Taxonomy" id="349124"/>
    <lineage>
        <taxon>Bacteria</taxon>
        <taxon>Pseudomonadati</taxon>
        <taxon>Pseudomonadota</taxon>
        <taxon>Gammaproteobacteria</taxon>
        <taxon>Chromatiales</taxon>
        <taxon>Ectothiorhodospiraceae</taxon>
        <taxon>Halorhodospira</taxon>
    </lineage>
</organism>
<proteinExistence type="inferred from homology"/>
<name>RIMK_HALHL</name>
<feature type="chain" id="PRO_1000068843" description="Probable alpha-L-glutamate ligase">
    <location>
        <begin position="1"/>
        <end position="302"/>
    </location>
</feature>
<feature type="domain" description="ATP-grasp" evidence="1">
    <location>
        <begin position="104"/>
        <end position="287"/>
    </location>
</feature>
<feature type="binding site" evidence="1">
    <location>
        <position position="141"/>
    </location>
    <ligand>
        <name>ATP</name>
        <dbReference type="ChEBI" id="CHEBI:30616"/>
    </ligand>
</feature>
<feature type="binding site" evidence="1">
    <location>
        <begin position="178"/>
        <end position="179"/>
    </location>
    <ligand>
        <name>ATP</name>
        <dbReference type="ChEBI" id="CHEBI:30616"/>
    </ligand>
</feature>
<feature type="binding site" evidence="1">
    <location>
        <position position="187"/>
    </location>
    <ligand>
        <name>ATP</name>
        <dbReference type="ChEBI" id="CHEBI:30616"/>
    </ligand>
</feature>
<feature type="binding site" evidence="1">
    <location>
        <begin position="211"/>
        <end position="213"/>
    </location>
    <ligand>
        <name>ATP</name>
        <dbReference type="ChEBI" id="CHEBI:30616"/>
    </ligand>
</feature>
<feature type="binding site" evidence="1">
    <location>
        <position position="248"/>
    </location>
    <ligand>
        <name>Mg(2+)</name>
        <dbReference type="ChEBI" id="CHEBI:18420"/>
        <label>1</label>
    </ligand>
</feature>
<feature type="binding site" evidence="1">
    <location>
        <position position="248"/>
    </location>
    <ligand>
        <name>Mn(2+)</name>
        <dbReference type="ChEBI" id="CHEBI:29035"/>
        <label>1</label>
    </ligand>
</feature>
<feature type="binding site" evidence="1">
    <location>
        <position position="260"/>
    </location>
    <ligand>
        <name>Mg(2+)</name>
        <dbReference type="ChEBI" id="CHEBI:18420"/>
        <label>1</label>
    </ligand>
</feature>
<feature type="binding site" evidence="1">
    <location>
        <position position="260"/>
    </location>
    <ligand>
        <name>Mg(2+)</name>
        <dbReference type="ChEBI" id="CHEBI:18420"/>
        <label>2</label>
    </ligand>
</feature>
<feature type="binding site" evidence="1">
    <location>
        <position position="260"/>
    </location>
    <ligand>
        <name>Mn(2+)</name>
        <dbReference type="ChEBI" id="CHEBI:29035"/>
        <label>1</label>
    </ligand>
</feature>
<feature type="binding site" evidence="1">
    <location>
        <position position="260"/>
    </location>
    <ligand>
        <name>Mn(2+)</name>
        <dbReference type="ChEBI" id="CHEBI:29035"/>
        <label>2</label>
    </ligand>
</feature>
<feature type="binding site" evidence="1">
    <location>
        <position position="262"/>
    </location>
    <ligand>
        <name>Mg(2+)</name>
        <dbReference type="ChEBI" id="CHEBI:18420"/>
        <label>2</label>
    </ligand>
</feature>
<feature type="binding site" evidence="1">
    <location>
        <position position="262"/>
    </location>
    <ligand>
        <name>Mn(2+)</name>
        <dbReference type="ChEBI" id="CHEBI:29035"/>
        <label>2</label>
    </ligand>
</feature>
<keyword id="KW-0067">ATP-binding</keyword>
<keyword id="KW-0436">Ligase</keyword>
<keyword id="KW-0460">Magnesium</keyword>
<keyword id="KW-0464">Manganese</keyword>
<keyword id="KW-0479">Metal-binding</keyword>
<keyword id="KW-0547">Nucleotide-binding</keyword>
<keyword id="KW-0648">Protein biosynthesis</keyword>
<keyword id="KW-1185">Reference proteome</keyword>
<dbReference type="EC" id="6.3.2.-" evidence="1"/>
<dbReference type="EMBL" id="CP000544">
    <property type="protein sequence ID" value="ABM61038.1"/>
    <property type="molecule type" value="Genomic_DNA"/>
</dbReference>
<dbReference type="RefSeq" id="WP_011813061.1">
    <property type="nucleotide sequence ID" value="NC_008789.1"/>
</dbReference>
<dbReference type="SMR" id="A1WTM6"/>
<dbReference type="STRING" id="349124.Hhal_0244"/>
<dbReference type="KEGG" id="hha:Hhal_0244"/>
<dbReference type="eggNOG" id="COG0189">
    <property type="taxonomic scope" value="Bacteria"/>
</dbReference>
<dbReference type="HOGENOM" id="CLU_054353_0_1_6"/>
<dbReference type="OrthoDB" id="3865600at2"/>
<dbReference type="Proteomes" id="UP000000647">
    <property type="component" value="Chromosome"/>
</dbReference>
<dbReference type="GO" id="GO:0005737">
    <property type="term" value="C:cytoplasm"/>
    <property type="evidence" value="ECO:0007669"/>
    <property type="project" value="TreeGrafter"/>
</dbReference>
<dbReference type="GO" id="GO:0005524">
    <property type="term" value="F:ATP binding"/>
    <property type="evidence" value="ECO:0007669"/>
    <property type="project" value="UniProtKB-UniRule"/>
</dbReference>
<dbReference type="GO" id="GO:0046872">
    <property type="term" value="F:metal ion binding"/>
    <property type="evidence" value="ECO:0007669"/>
    <property type="project" value="UniProtKB-KW"/>
</dbReference>
<dbReference type="GO" id="GO:0018169">
    <property type="term" value="F:ribosomal S6-glutamic acid ligase activity"/>
    <property type="evidence" value="ECO:0007669"/>
    <property type="project" value="TreeGrafter"/>
</dbReference>
<dbReference type="GO" id="GO:0036211">
    <property type="term" value="P:protein modification process"/>
    <property type="evidence" value="ECO:0007669"/>
    <property type="project" value="InterPro"/>
</dbReference>
<dbReference type="GO" id="GO:0009432">
    <property type="term" value="P:SOS response"/>
    <property type="evidence" value="ECO:0007669"/>
    <property type="project" value="TreeGrafter"/>
</dbReference>
<dbReference type="GO" id="GO:0006412">
    <property type="term" value="P:translation"/>
    <property type="evidence" value="ECO:0007669"/>
    <property type="project" value="UniProtKB-KW"/>
</dbReference>
<dbReference type="FunFam" id="3.30.470.20:FF:000058">
    <property type="entry name" value="Alpha-aminoadipate--LysW ligase LysX protein"/>
    <property type="match status" value="1"/>
</dbReference>
<dbReference type="FunFam" id="3.40.50.20:FF:000004">
    <property type="entry name" value="Probable alpha-L-glutamate ligase"/>
    <property type="match status" value="1"/>
</dbReference>
<dbReference type="FunFam" id="3.30.1490.20:FF:000005">
    <property type="entry name" value="Probable alpha-L-glutamate ligase 1"/>
    <property type="match status" value="1"/>
</dbReference>
<dbReference type="Gene3D" id="3.40.50.20">
    <property type="match status" value="1"/>
</dbReference>
<dbReference type="Gene3D" id="3.30.1490.20">
    <property type="entry name" value="ATP-grasp fold, A domain"/>
    <property type="match status" value="1"/>
</dbReference>
<dbReference type="Gene3D" id="3.30.470.20">
    <property type="entry name" value="ATP-grasp fold, B domain"/>
    <property type="match status" value="1"/>
</dbReference>
<dbReference type="HAMAP" id="MF_01552">
    <property type="entry name" value="RimK"/>
    <property type="match status" value="1"/>
</dbReference>
<dbReference type="InterPro" id="IPR011761">
    <property type="entry name" value="ATP-grasp"/>
</dbReference>
<dbReference type="InterPro" id="IPR013651">
    <property type="entry name" value="ATP-grasp_RimK-type"/>
</dbReference>
<dbReference type="InterPro" id="IPR013815">
    <property type="entry name" value="ATP_grasp_subdomain_1"/>
</dbReference>
<dbReference type="InterPro" id="IPR023533">
    <property type="entry name" value="RimK"/>
</dbReference>
<dbReference type="InterPro" id="IPR041107">
    <property type="entry name" value="Rimk_N"/>
</dbReference>
<dbReference type="InterPro" id="IPR004666">
    <property type="entry name" value="Rp_bS6_RimK/Lys_biosynth_LsyX"/>
</dbReference>
<dbReference type="NCBIfam" id="NF007764">
    <property type="entry name" value="PRK10446.1"/>
    <property type="match status" value="1"/>
</dbReference>
<dbReference type="NCBIfam" id="TIGR00768">
    <property type="entry name" value="rimK_fam"/>
    <property type="match status" value="1"/>
</dbReference>
<dbReference type="PANTHER" id="PTHR21621:SF7">
    <property type="entry name" value="RIBOSOMAL PROTEIN BS6--L-GLUTAMATE LIGASE"/>
    <property type="match status" value="1"/>
</dbReference>
<dbReference type="PANTHER" id="PTHR21621">
    <property type="entry name" value="RIBOSOMAL PROTEIN S6 MODIFICATION PROTEIN"/>
    <property type="match status" value="1"/>
</dbReference>
<dbReference type="Pfam" id="PF08443">
    <property type="entry name" value="RimK"/>
    <property type="match status" value="1"/>
</dbReference>
<dbReference type="Pfam" id="PF18030">
    <property type="entry name" value="Rimk_N"/>
    <property type="match status" value="1"/>
</dbReference>
<dbReference type="SUPFAM" id="SSF56059">
    <property type="entry name" value="Glutathione synthetase ATP-binding domain-like"/>
    <property type="match status" value="1"/>
</dbReference>
<dbReference type="PROSITE" id="PS50975">
    <property type="entry name" value="ATP_GRASP"/>
    <property type="match status" value="1"/>
</dbReference>
<reference key="1">
    <citation type="submission" date="2006-12" db="EMBL/GenBank/DDBJ databases">
        <title>Complete sequence of Halorhodospira halophila SL1.</title>
        <authorList>
            <consortium name="US DOE Joint Genome Institute"/>
            <person name="Copeland A."/>
            <person name="Lucas S."/>
            <person name="Lapidus A."/>
            <person name="Barry K."/>
            <person name="Detter J.C."/>
            <person name="Glavina del Rio T."/>
            <person name="Hammon N."/>
            <person name="Israni S."/>
            <person name="Dalin E."/>
            <person name="Tice H."/>
            <person name="Pitluck S."/>
            <person name="Saunders E."/>
            <person name="Brettin T."/>
            <person name="Bruce D."/>
            <person name="Han C."/>
            <person name="Tapia R."/>
            <person name="Schmutz J."/>
            <person name="Larimer F."/>
            <person name="Land M."/>
            <person name="Hauser L."/>
            <person name="Kyrpides N."/>
            <person name="Mikhailova N."/>
            <person name="Hoff W."/>
            <person name="Richardson P."/>
        </authorList>
    </citation>
    <scope>NUCLEOTIDE SEQUENCE [LARGE SCALE GENOMIC DNA]</scope>
    <source>
        <strain>DSM 244 / SL1</strain>
    </source>
</reference>
<evidence type="ECO:0000255" key="1">
    <source>
        <dbReference type="HAMAP-Rule" id="MF_01552"/>
    </source>
</evidence>
<sequence>MKIAVLSRNSRLYSTRRLMEAAQSRGHQIRVVDPLRCYMNIATSNPEIHYKGQKLEAFDAVIPRIGASITFYGTAVLRQFEMLGTYPLNESQGISRSRDKLRSMQLLSREGVGMPATGFAHSPDDTDDLMQLVGGSPVVIKLLEGTQGIGVVLAETRKAASSVIQALRGLKAHFLVQEFIEEAGGADIRCLVVGGKVVAAMKRQGKEGEFRSNLHRGGSASLVRITPKERATAVKAAKVLGLNVCGVDILRANSGPVIMEVNSSPGLEGIETATGKDVAGMIIEFIERNRKPGKTGTKGRRG</sequence>
<comment type="cofactor">
    <cofactor evidence="1">
        <name>Mg(2+)</name>
        <dbReference type="ChEBI" id="CHEBI:18420"/>
    </cofactor>
    <cofactor evidence="1">
        <name>Mn(2+)</name>
        <dbReference type="ChEBI" id="CHEBI:29035"/>
    </cofactor>
    <text evidence="1">Binds 2 magnesium or manganese ions per subunit.</text>
</comment>
<comment type="similarity">
    <text evidence="1">Belongs to the RimK family.</text>
</comment>